<organism>
    <name type="scientific">Homo sapiens</name>
    <name type="common">Human</name>
    <dbReference type="NCBI Taxonomy" id="9606"/>
    <lineage>
        <taxon>Eukaryota</taxon>
        <taxon>Metazoa</taxon>
        <taxon>Chordata</taxon>
        <taxon>Craniata</taxon>
        <taxon>Vertebrata</taxon>
        <taxon>Euteleostomi</taxon>
        <taxon>Mammalia</taxon>
        <taxon>Eutheria</taxon>
        <taxon>Euarchontoglires</taxon>
        <taxon>Primates</taxon>
        <taxon>Haplorrhini</taxon>
        <taxon>Catarrhini</taxon>
        <taxon>Hominidae</taxon>
        <taxon>Homo</taxon>
    </lineage>
</organism>
<gene>
    <name evidence="14 19" type="primary">IGKV1D-33</name>
</gene>
<accession>P01593</accession>
<accession>A0A0B4J1U0</accession>
<accession>P01595</accession>
<accession>P01605</accession>
<accession>P01607</accession>
<accession>P01608</accession>
<accession>P01609</accession>
<accession>P01613</accession>
<accession>P80362</accession>
<evidence type="ECO:0000250" key="1">
    <source>
        <dbReference type="UniProtKB" id="P01602"/>
    </source>
</evidence>
<evidence type="ECO:0000255" key="2">
    <source>
        <dbReference type="PROSITE-ProRule" id="PRU00114"/>
    </source>
</evidence>
<evidence type="ECO:0000269" key="3">
    <source>
    </source>
</evidence>
<evidence type="ECO:0000269" key="4">
    <source>
    </source>
</evidence>
<evidence type="ECO:0000269" key="5">
    <source>
    </source>
</evidence>
<evidence type="ECO:0000269" key="6">
    <source>
    </source>
</evidence>
<evidence type="ECO:0000269" key="7">
    <source>
    </source>
</evidence>
<evidence type="ECO:0000269" key="8">
    <source>
    </source>
</evidence>
<evidence type="ECO:0000269" key="9">
    <source>
    </source>
</evidence>
<evidence type="ECO:0000269" key="10">
    <source>
    </source>
</evidence>
<evidence type="ECO:0000269" key="11">
    <source>
    </source>
</evidence>
<evidence type="ECO:0000269" key="12">
    <source>
    </source>
</evidence>
<evidence type="ECO:0000269" key="13">
    <source>
    </source>
</evidence>
<evidence type="ECO:0000303" key="14">
    <source>
    </source>
</evidence>
<evidence type="ECO:0000303" key="15">
    <source>
    </source>
</evidence>
<evidence type="ECO:0000303" key="16">
    <source>
    </source>
</evidence>
<evidence type="ECO:0000303" key="17">
    <source>
    </source>
</evidence>
<evidence type="ECO:0000303" key="18">
    <source>
    </source>
</evidence>
<evidence type="ECO:0000303" key="19">
    <source ref="15"/>
</evidence>
<evidence type="ECO:0000305" key="20"/>
<evidence type="ECO:0000305" key="21">
    <source>
    </source>
</evidence>
<evidence type="ECO:0000305" key="22">
    <source>
    </source>
</evidence>
<evidence type="ECO:0000305" key="23">
    <source>
    </source>
</evidence>
<evidence type="ECO:0000305" key="24">
    <source>
    </source>
</evidence>
<evidence type="ECO:0000305" key="25">
    <source>
    </source>
</evidence>
<evidence type="ECO:0000305" key="26">
    <source>
    </source>
</evidence>
<evidence type="ECO:0000305" key="27">
    <source>
    </source>
</evidence>
<evidence type="ECO:0000305" key="28">
    <source>
    </source>
</evidence>
<evidence type="ECO:0000305" key="29">
    <source>
    </source>
</evidence>
<evidence type="ECO:0000305" key="30">
    <source>
    </source>
</evidence>
<evidence type="ECO:0007829" key="31">
    <source>
        <dbReference type="PDB" id="4L1H"/>
    </source>
</evidence>
<feature type="signal peptide" evidence="4 5 6 7 8 9 10 11 12 13">
    <location>
        <begin position="1"/>
        <end position="22"/>
    </location>
</feature>
<feature type="chain" id="PRO_0000059737" description="Immunoglobulin kappa variable 1D-33" evidence="4 5 6 7 8 9 11 12 13">
    <location>
        <begin position="23"/>
        <end position="117"/>
    </location>
</feature>
<feature type="domain" description="Ig-like" evidence="2">
    <location>
        <begin position="24"/>
        <end position="117" status="greater than"/>
    </location>
</feature>
<feature type="region of interest" description="Framework-1" evidence="1">
    <location>
        <begin position="23"/>
        <end position="45"/>
    </location>
</feature>
<feature type="region of interest" description="Complementarity-determining-1" evidence="1">
    <location>
        <begin position="46"/>
        <end position="56"/>
    </location>
</feature>
<feature type="region of interest" description="Framework-2" evidence="1">
    <location>
        <begin position="57"/>
        <end position="71"/>
    </location>
</feature>
<feature type="region of interest" description="Complementarity-determining-2" evidence="1">
    <location>
        <begin position="72"/>
        <end position="78"/>
    </location>
</feature>
<feature type="region of interest" description="Framework-3" evidence="1">
    <location>
        <begin position="79"/>
        <end position="110"/>
    </location>
</feature>
<feature type="region of interest" description="Complementarity-determining-3" evidence="1">
    <location>
        <begin position="111"/>
        <end position="117" status="greater than"/>
    </location>
</feature>
<feature type="disulfide bond" evidence="2 3">
    <location>
        <begin position="45"/>
        <end position="110"/>
    </location>
</feature>
<feature type="sequence conflict" description="In Ref. 5; AA sequence." evidence="20" ref="5">
    <original>S</original>
    <variation>P</variation>
    <location>
        <position position="32"/>
    </location>
</feature>
<feature type="sequence conflict" description="In Ref. 9; AA sequence and 10; AA sequence." evidence="20" ref="9 10">
    <original>A</original>
    <variation>V</variation>
    <location>
        <position position="35"/>
    </location>
</feature>
<feature type="sequence conflict" description="In Ref. 6; AA sequence." evidence="20" ref="6">
    <original>S</original>
    <variation>T</variation>
    <location>
        <position position="36"/>
    </location>
</feature>
<feature type="sequence conflict" description="In Ref. 5; AA sequence." evidence="20" ref="5">
    <original>R</original>
    <variation>S</variation>
    <location>
        <position position="40"/>
    </location>
</feature>
<feature type="sequence conflict" description="In Ref. 6; AA sequence." evidence="20" ref="6">
    <original>ITCQ</original>
    <variation>LLCE</variation>
    <location>
        <begin position="43"/>
        <end position="46"/>
    </location>
</feature>
<feature type="sequence conflict" description="In Ref. 12; AA sequence and 13; AA sequence." evidence="20" ref="12 13">
    <original>Q</original>
    <variation>R</variation>
    <location>
        <position position="46"/>
    </location>
</feature>
<feature type="sequence conflict" description="In Ref. 6; AA sequence." evidence="20" ref="6">
    <original>DISNYLN</original>
    <variation>SVLESGNTFLA</variation>
    <location>
        <begin position="50"/>
        <end position="56"/>
    </location>
</feature>
<feature type="sequence conflict" description="In Ref. 9; AA sequence and 10; AA sequence." evidence="20" ref="9 10">
    <original>DISN</original>
    <variation>NVNA</variation>
    <location>
        <begin position="50"/>
        <end position="53"/>
    </location>
</feature>
<feature type="sequence conflict" description="In Ref. 5; AA sequence." evidence="20" ref="5">
    <original>SNYLN</original>
    <variation>RNSLI</variation>
    <location>
        <begin position="52"/>
        <end position="56"/>
    </location>
</feature>
<feature type="sequence conflict" description="In Ref. 7; AA sequence." evidence="20" ref="7">
    <original>SNY</original>
    <variation>RKH</variation>
    <location>
        <begin position="52"/>
        <end position="54"/>
    </location>
</feature>
<feature type="sequence conflict" description="In Ref. 8; AA sequence." evidence="20" ref="8">
    <original>SN</original>
    <variation>IK</variation>
    <location>
        <begin position="52"/>
        <end position="53"/>
    </location>
</feature>
<feature type="sequence conflict" description="In Ref. 4; AA sequence." evidence="20" ref="4">
    <original>SN</original>
    <variation>NH</variation>
    <location>
        <begin position="52"/>
        <end position="53"/>
    </location>
</feature>
<feature type="sequence conflict" description="In Ref. 12; AA sequence and 13; AA sequence." evidence="20" ref="12 13">
    <original>S</original>
    <variation>T</variation>
    <location>
        <position position="52"/>
    </location>
</feature>
<feature type="sequence conflict" description="In Ref. 2; AA sequence." evidence="20" ref="2">
    <original>NY</original>
    <variation>IF</variation>
    <location>
        <begin position="53"/>
        <end position="54"/>
    </location>
</feature>
<feature type="sequence conflict" description="In Ref. 13; AA sequence." evidence="20" ref="13">
    <original>N</original>
    <variation>D</variation>
    <location>
        <position position="53"/>
    </location>
</feature>
<feature type="sequence conflict" description="In Ref. 12; AA sequence and 13; AA sequence." evidence="20" ref="12 13">
    <original>L</original>
    <variation>V</variation>
    <location>
        <position position="55"/>
    </location>
</feature>
<feature type="sequence conflict" description="In Ref. 12; AA sequence." evidence="20" ref="12">
    <original>Y</original>
    <variation>F</variation>
    <location>
        <position position="58"/>
    </location>
</feature>
<feature type="sequence conflict" description="In Ref. 7; AA sequence." evidence="20" ref="7">
    <original>Q</original>
    <variation>D</variation>
    <location>
        <position position="59"/>
    </location>
</feature>
<feature type="sequence conflict" description="In Ref. 4; AA sequence." evidence="20" ref="4">
    <original>K</original>
    <variation>G</variation>
    <location>
        <position position="61"/>
    </location>
</feature>
<feature type="sequence conflict" description="In Ref. 12; AA sequence." evidence="20" ref="12">
    <original>K</original>
    <variation>R</variation>
    <location>
        <position position="61"/>
    </location>
</feature>
<feature type="sequence conflict" description="In Ref. 8; AA sequence." evidence="20" ref="8">
    <original>K</original>
    <variation>T</variation>
    <location>
        <position position="61"/>
    </location>
</feature>
<feature type="sequence conflict" description="In Ref. 6; AA sequence and 4; AA sequence." evidence="20" ref="6 4">
    <original>G</original>
    <variation>K</variation>
    <location>
        <position position="63"/>
    </location>
</feature>
<feature type="sequence conflict" description="In Ref. 9; AA sequence and 10; AA sequence." evidence="20" ref="9 10">
    <original>K</original>
    <variation>L</variation>
    <location>
        <position position="64"/>
    </location>
</feature>
<feature type="sequence conflict" description="In Ref. 12; AA sequence." evidence="20" ref="12">
    <original>K</original>
    <variation>Q</variation>
    <location>
        <position position="64"/>
    </location>
</feature>
<feature type="sequence conflict" description="In Ref. 7; AA sequence." evidence="20" ref="7">
    <original>K</original>
    <variation>R</variation>
    <location>
        <position position="67"/>
    </location>
</feature>
<feature type="sequence conflict" description="In Ref. 5; AA sequence." evidence="20" ref="5">
    <original>L</original>
    <variation>F</variation>
    <location>
        <position position="68"/>
    </location>
</feature>
<feature type="sequence conflict" description="In Ref. 4; AA sequence." evidence="20" ref="4">
    <original>L</original>
    <variation>I</variation>
    <location>
        <position position="68"/>
    </location>
</feature>
<feature type="sequence conflict" description="In Ref. 12; AA sequence." evidence="20" ref="12">
    <original>L</original>
    <variation>V</variation>
    <location>
        <position position="68"/>
    </location>
</feature>
<feature type="sequence conflict" description="In Ref. 8; AA sequence." evidence="20" ref="8">
    <original>D</original>
    <variation>E</variation>
    <location>
        <position position="72"/>
    </location>
</feature>
<feature type="sequence conflict" description="In Ref. 12; AA sequence, 7; AA sequence, 9; AA sequence and 10; AA sequence." evidence="20" ref="12 7 9 10">
    <original>D</original>
    <variation>G</variation>
    <location>
        <position position="72"/>
    </location>
</feature>
<feature type="sequence conflict" description="In Ref. 5; AA sequence." evidence="20" ref="5">
    <original>S</original>
    <variation>E</variation>
    <location>
        <position position="74"/>
    </location>
</feature>
<feature type="sequence conflict" description="In Ref. 12; AA sequence." evidence="20" ref="12">
    <original>N</original>
    <variation>I</variation>
    <location>
        <position position="75"/>
    </location>
</feature>
<feature type="sequence conflict" description="In Ref. 2; AA sequence." evidence="20" ref="2">
    <original>N</original>
    <variation>K</variation>
    <location>
        <position position="75"/>
    </location>
</feature>
<feature type="sequence conflict" description="In Ref. 7; AA sequence, 9; AA sequence and 10; AA sequence." evidence="20" ref="7 9 10">
    <original>N</original>
    <variation>T</variation>
    <location>
        <position position="75"/>
    </location>
</feature>
<feature type="sequence conflict" description="In Ref. 9; AA sequence and 10; AA sequence." evidence="20" ref="9 10">
    <original>L</original>
    <variation>R</variation>
    <location>
        <position position="76"/>
    </location>
</feature>
<feature type="sequence conflict" description="In Ref. 8; AA sequence." evidence="20" ref="8">
    <original>E</original>
    <variation>Q</variation>
    <location>
        <position position="77"/>
    </location>
</feature>
<feature type="sequence conflict" description="In Ref. 2; AA sequence, 9; AA sequence, 10; AA sequence and 8; AA sequence." evidence="20" ref="2 9 10 8">
    <original>T</original>
    <variation>A</variation>
    <location>
        <position position="78"/>
    </location>
</feature>
<feature type="sequence conflict" description="In Ref. 5; AA sequence." evidence="20" ref="5">
    <original>T</original>
    <variation>I</variation>
    <location>
        <position position="78"/>
    </location>
</feature>
<feature type="sequence conflict" description="In Ref. 5; AA sequence." evidence="20" ref="5">
    <original>S</original>
    <variation>R</variation>
    <location>
        <position position="85"/>
    </location>
</feature>
<feature type="sequence conflict" description="In Ref. 6; AA sequence." evidence="20" ref="6">
    <original>G</original>
    <variation>E</variation>
    <location>
        <position position="86"/>
    </location>
</feature>
<feature type="sequence conflict" description="In Ref. 2; AA sequence." evidence="20" ref="2">
    <original>S</original>
    <variation>T</variation>
    <location>
        <position position="87"/>
    </location>
</feature>
<feature type="sequence conflict" description="In Ref. 4; AA sequence." evidence="20" ref="4">
    <original>S</original>
    <variation>F</variation>
    <location>
        <position position="89"/>
    </location>
</feature>
<feature type="sequence conflict" description="In Ref. 8; AA sequence." evidence="20" ref="8">
    <original>F</original>
    <variation>Y</variation>
    <location>
        <position position="93"/>
    </location>
</feature>
<feature type="sequence conflict" description="In Ref. 5; AA sequence." evidence="20" ref="5">
    <original>TFT</original>
    <variation>ALS</variation>
    <location>
        <begin position="94"/>
        <end position="96"/>
    </location>
</feature>
<feature type="sequence conflict" description="In Ref. 7; AA sequence." evidence="20" ref="7">
    <original>F</original>
    <variation>L</variation>
    <location>
        <position position="95"/>
    </location>
</feature>
<feature type="sequence conflict" description="In Ref. 4; AA sequence and 6; AA sequence." evidence="20" ref="4 6">
    <original>S</original>
    <variation>G</variation>
    <location>
        <position position="99"/>
    </location>
</feature>
<feature type="sequence conflict" description="In Ref. 7; AA sequence." evidence="20" ref="7">
    <original>S</original>
    <variation>T</variation>
    <location>
        <position position="99"/>
    </location>
</feature>
<feature type="sequence conflict" description="In Ref. 5; AA sequence and 6; AA sequence." evidence="20" ref="5 6">
    <original>I</original>
    <variation>F</variation>
    <location>
        <position position="105"/>
    </location>
</feature>
<feature type="sequence conflict" description="In Ref. 7; AA sequence." evidence="20" ref="7">
    <original>AT</original>
    <variation>GN</variation>
    <location>
        <begin position="106"/>
        <end position="107"/>
    </location>
</feature>
<feature type="sequence conflict" description="In Ref. 6; AA sequence." evidence="20" ref="6">
    <original>T</original>
    <variation>V</variation>
    <location>
        <position position="107"/>
    </location>
</feature>
<feature type="sequence conflict" description="In Ref. 2; AA sequence." evidence="20" ref="2">
    <original>Y</original>
    <variation>F</variation>
    <location>
        <position position="113"/>
    </location>
</feature>
<feature type="sequence conflict" description="In Ref. 9; AA sequence and 10; AA sequence." evidence="20" ref="9 10">
    <original>DNL</original>
    <variation>NNW</variation>
    <location>
        <begin position="114"/>
        <end position="116"/>
    </location>
</feature>
<feature type="sequence conflict" description="In Ref. 8; AA sequence." evidence="20" ref="8">
    <original>DN</original>
    <variation>QS</variation>
    <location>
        <begin position="114"/>
        <end position="115"/>
    </location>
</feature>
<feature type="sequence conflict" description="In Ref. 5; AA sequence." evidence="20" ref="5">
    <original>D</original>
    <variation>Y</variation>
    <location>
        <position position="114"/>
    </location>
</feature>
<feature type="sequence conflict" description="In Ref. 12; AA sequence, 6; AA sequence and 4; AA sequence." evidence="20" ref="12 6 4">
    <original>N</original>
    <variation>T</variation>
    <location>
        <position position="115"/>
    </location>
</feature>
<feature type="sequence conflict" description="In Ref. 7; AA sequence." evidence="20" ref="7">
    <original>L</original>
    <variation>V</variation>
    <location>
        <position position="116"/>
    </location>
</feature>
<feature type="non-terminal residue">
    <location>
        <position position="117"/>
    </location>
</feature>
<feature type="strand" evidence="31">
    <location>
        <begin position="26"/>
        <end position="29"/>
    </location>
</feature>
<feature type="strand" evidence="31">
    <location>
        <begin position="31"/>
        <end position="35"/>
    </location>
</feature>
<feature type="strand" evidence="31">
    <location>
        <begin position="41"/>
        <end position="49"/>
    </location>
</feature>
<feature type="strand" evidence="31">
    <location>
        <begin position="55"/>
        <end position="60"/>
    </location>
</feature>
<feature type="strand" evidence="31">
    <location>
        <begin position="67"/>
        <end position="71"/>
    </location>
</feature>
<feature type="turn" evidence="31">
    <location>
        <begin position="72"/>
        <end position="74"/>
    </location>
</feature>
<feature type="strand" evidence="31">
    <location>
        <begin position="84"/>
        <end position="89"/>
    </location>
</feature>
<feature type="strand" evidence="31">
    <location>
        <begin position="92"/>
        <end position="99"/>
    </location>
</feature>
<feature type="helix" evidence="31">
    <location>
        <begin position="102"/>
        <end position="104"/>
    </location>
</feature>
<feature type="strand" evidence="31">
    <location>
        <begin position="106"/>
        <end position="112"/>
    </location>
</feature>
<feature type="strand" evidence="31">
    <location>
        <begin position="114"/>
        <end position="117"/>
    </location>
</feature>
<proteinExistence type="evidence at protein level"/>
<protein>
    <recommendedName>
        <fullName evidence="14 19">Immunoglobulin kappa variable 1D-33</fullName>
    </recommendedName>
    <alternativeName>
        <fullName evidence="25">Ig kappa chain V-I region AG</fullName>
    </alternativeName>
    <alternativeName>
        <fullName evidence="23">Ig kappa chain V-I region Bi</fullName>
    </alternativeName>
    <alternativeName>
        <fullName evidence="21 30">Ig kappa chain V-I region Lay</fullName>
    </alternativeName>
    <alternativeName>
        <fullName evidence="24">Ig kappa chain V-I region Ni</fullName>
    </alternativeName>
    <alternativeName>
        <fullName evidence="29">Ig kappa chain V-I region Rei</fullName>
    </alternativeName>
    <alternativeName>
        <fullName evidence="26">Ig kappa chain V-I region Roy</fullName>
    </alternativeName>
    <alternativeName>
        <fullName evidence="22">Ig kappa chain V-I region Scw</fullName>
    </alternativeName>
    <alternativeName>
        <fullName evidence="27 28">Ig kappa chain V-I region WAT</fullName>
    </alternativeName>
</protein>
<comment type="function">
    <text evidence="15 16 17 18">V region of the variable domain of immunoglobulin light chains that participates in the antigen recognition (PubMed:24600447). Immunoglobulins, also known as antibodies, are membrane-bound or secreted glycoproteins produced by B lymphocytes. In the recognition phase of humoral immunity, the membrane-bound immunoglobulins serve as receptors which, upon binding of a specific antigen, trigger the clonal expansion and differentiation of B lymphocytes into immunoglobulins-secreting plasma cells. Secreted immunoglobulins mediate the effector phase of humoral immunity, which results in the elimination of bound antigens (PubMed:20176268, PubMed:22158414). The antigen binding site is formed by the variable domain of one heavy chain, together with that of its associated light chain. Thus, each immunoglobulin has two antigen binding sites with remarkable affinity for a particular antigen. The variable domains are assembled by a process called V-(D)-J rearrangement and can then be subjected to somatic hypermutations which, after exposure to antigen and selection, allow affinity maturation for a particular antigen (PubMed:17576170, PubMed:20176268).</text>
</comment>
<comment type="subunit">
    <text evidence="16">Immunoglobulins are composed of two identical heavy chains and two identical light chains; disulfide-linked.</text>
</comment>
<comment type="subcellular location">
    <subcellularLocation>
        <location evidence="16 17">Secreted</location>
    </subcellularLocation>
    <subcellularLocation>
        <location evidence="16 17">Cell membrane</location>
    </subcellularLocation>
</comment>
<comment type="polymorphism">
    <text>There are several alleles. The sequence shown is that of IMGT allele IGKV1D-33*01.</text>
</comment>
<comment type="caution">
    <text evidence="20">For an example of a full-length immunoglobulin kappa light chain see AC P0DOX7.</text>
</comment>
<sequence>MDMRVPAQLLGLLLLWLSGARCDIQMTQSPSSLSASVGDRVTITCQASQDISNYLNWYQQKPGKAPKLLIYDASNLETGVPSRFSGSGSGTDFTFTISSLQPEDIATYYCQQYDNLP</sequence>
<reference key="1">
    <citation type="journal article" date="2005" name="Nature">
        <title>Generation and annotation of the DNA sequences of human chromosomes 2 and 4.</title>
        <authorList>
            <person name="Hillier L.W."/>
            <person name="Graves T.A."/>
            <person name="Fulton R.S."/>
            <person name="Fulton L.A."/>
            <person name="Pepin K.H."/>
            <person name="Minx P."/>
            <person name="Wagner-McPherson C."/>
            <person name="Layman D."/>
            <person name="Wylie K."/>
            <person name="Sekhon M."/>
            <person name="Becker M.C."/>
            <person name="Fewell G.A."/>
            <person name="Delehaunty K.D."/>
            <person name="Miner T.L."/>
            <person name="Nash W.E."/>
            <person name="Kremitzki C."/>
            <person name="Oddy L."/>
            <person name="Du H."/>
            <person name="Sun H."/>
            <person name="Bradshaw-Cordum H."/>
            <person name="Ali J."/>
            <person name="Carter J."/>
            <person name="Cordes M."/>
            <person name="Harris A."/>
            <person name="Isak A."/>
            <person name="van Brunt A."/>
            <person name="Nguyen C."/>
            <person name="Du F."/>
            <person name="Courtney L."/>
            <person name="Kalicki J."/>
            <person name="Ozersky P."/>
            <person name="Abbott S."/>
            <person name="Armstrong J."/>
            <person name="Belter E.A."/>
            <person name="Caruso L."/>
            <person name="Cedroni M."/>
            <person name="Cotton M."/>
            <person name="Davidson T."/>
            <person name="Desai A."/>
            <person name="Elliott G."/>
            <person name="Erb T."/>
            <person name="Fronick C."/>
            <person name="Gaige T."/>
            <person name="Haakenson W."/>
            <person name="Haglund K."/>
            <person name="Holmes A."/>
            <person name="Harkins R."/>
            <person name="Kim K."/>
            <person name="Kruchowski S.S."/>
            <person name="Strong C.M."/>
            <person name="Grewal N."/>
            <person name="Goyea E."/>
            <person name="Hou S."/>
            <person name="Levy A."/>
            <person name="Martinka S."/>
            <person name="Mead K."/>
            <person name="McLellan M.D."/>
            <person name="Meyer R."/>
            <person name="Randall-Maher J."/>
            <person name="Tomlinson C."/>
            <person name="Dauphin-Kohlberg S."/>
            <person name="Kozlowicz-Reilly A."/>
            <person name="Shah N."/>
            <person name="Swearengen-Shahid S."/>
            <person name="Snider J."/>
            <person name="Strong J.T."/>
            <person name="Thompson J."/>
            <person name="Yoakum M."/>
            <person name="Leonard S."/>
            <person name="Pearman C."/>
            <person name="Trani L."/>
            <person name="Radionenko M."/>
            <person name="Waligorski J.E."/>
            <person name="Wang C."/>
            <person name="Rock S.M."/>
            <person name="Tin-Wollam A.-M."/>
            <person name="Maupin R."/>
            <person name="Latreille P."/>
            <person name="Wendl M.C."/>
            <person name="Yang S.-P."/>
            <person name="Pohl C."/>
            <person name="Wallis J.W."/>
            <person name="Spieth J."/>
            <person name="Bieri T.A."/>
            <person name="Berkowicz N."/>
            <person name="Nelson J.O."/>
            <person name="Osborne J."/>
            <person name="Ding L."/>
            <person name="Meyer R."/>
            <person name="Sabo A."/>
            <person name="Shotland Y."/>
            <person name="Sinha P."/>
            <person name="Wohldmann P.E."/>
            <person name="Cook L.L."/>
            <person name="Hickenbotham M.T."/>
            <person name="Eldred J."/>
            <person name="Williams D."/>
            <person name="Jones T.A."/>
            <person name="She X."/>
            <person name="Ciccarelli F.D."/>
            <person name="Izaurralde E."/>
            <person name="Taylor J."/>
            <person name="Schmutz J."/>
            <person name="Myers R.M."/>
            <person name="Cox D.R."/>
            <person name="Huang X."/>
            <person name="McPherson J.D."/>
            <person name="Mardis E.R."/>
            <person name="Clifton S.W."/>
            <person name="Warren W.C."/>
            <person name="Chinwalla A.T."/>
            <person name="Eddy S.R."/>
            <person name="Marra M.A."/>
            <person name="Ovcharenko I."/>
            <person name="Furey T.S."/>
            <person name="Miller W."/>
            <person name="Eichler E.E."/>
            <person name="Bork P."/>
            <person name="Suyama M."/>
            <person name="Torrents D."/>
            <person name="Waterston R.H."/>
            <person name="Wilson R.K."/>
        </authorList>
    </citation>
    <scope>NUCLEOTIDE SEQUENCE [LARGE SCALE GENOMIC DNA] (IMGT ALLELE IGKV1D-33*01)</scope>
</reference>
<reference key="2">
    <citation type="journal article" date="1967" name="Hoppe-Seyler's Z. Physiol. Chem.">
        <title>Chemical structure of 2 kappa-type Bence Jones proteins (Roy and Cum.).</title>
        <authorList>
            <person name="Hilschmann N."/>
        </authorList>
    </citation>
    <scope>PROTEIN SEQUENCE OF 23-117</scope>
</reference>
<reference key="3">
    <citation type="book" date="1969" name="Gamma globulins: structure and function">
        <editorList>
            <person name="Franek F."/>
            <person name="Shugar D."/>
        </editorList>
        <authorList>
            <person name="Hilschmann N."/>
            <person name="Barnikol H.U."/>
            <person name="Hess M."/>
            <person name="Langer B."/>
            <person name="Ponstingl H."/>
            <person name="Steinmetz-Kayne M."/>
            <person name="Suter L."/>
            <person name="Watanabe S."/>
        </authorList>
    </citation>
    <scope>SEQUENCE REVISION TO 61 AND 63</scope>
</reference>
<reference key="4">
    <citation type="journal article" date="1969" name="J. Biol. Chem.">
        <title>The amino acid sequence of a kappa type Bence-Jones protein. 3. The complete sequence and the location of the disulfide bridges.</title>
        <authorList>
            <person name="Titani K."/>
            <person name="Shinoda T."/>
            <person name="Putnam F.W."/>
        </authorList>
    </citation>
    <scope>PROTEIN SEQUENCE OF 23-117</scope>
</reference>
<reference key="5">
    <citation type="journal article" date="1972" name="Hoppe-Seyler's Z. Physiol. Chem.">
        <title>Principle of antibody structure. The primary structure of a monoclonal kappa I-type immunoglobulin L-chain (Bence Jones protein Bi). 3. The complete amino acid sequence and the genetic significance of the variability principles for the mechanism of antibody formation.</title>
        <authorList>
            <person name="Braun M."/>
            <person name="Leibold W."/>
            <person name="Barnikol H.U."/>
            <person name="Hilschmann N."/>
        </authorList>
    </citation>
    <scope>PROTEIN SEQUENCE OF 23-117</scope>
</reference>
<reference key="6">
    <citation type="journal article" date="1973" name="J. Biochem.">
        <title>Amino acid sequence of a human kappa type Bence-Jones protein. II. Chymotryptic peptides and sequence of protein Ni.</title>
        <authorList>
            <person name="Shinoda T."/>
        </authorList>
    </citation>
    <scope>PROTEIN SEQUENCE OF 23-117</scope>
</reference>
<reference key="7">
    <citation type="journal article" date="1974" name="Hoppe-Seyler's Z. Physiol. Chem.">
        <title>The primary structure of a human immunoglobulin L-chain of kappa-type (Bence-Jones protein Scw.), II: the chymotryptic peptides and the complete amino acid sequence.</title>
        <authorList>
            <person name="Eulitz M."/>
            <person name="Hilschmann N."/>
        </authorList>
    </citation>
    <scope>PROTEIN SEQUENCE OF 23-117</scope>
</reference>
<reference key="8">
    <citation type="journal article" date="1975" name="Hoppe-Seyler's Z. Physiol. Chem.">
        <title>The primary structure of a crystalline monoclonal immunoglobulin kappa-type L-chain, subgroup I (Bence-Jones protein Rei); isolation and characterization of the tryptic peptides; the complete amino acid sequence of the protein; a contribution to the elucidation of the three-dimensional structure of antibodies, in particular their combining site.</title>
        <authorList>
            <person name="Palm W."/>
            <person name="Hilschmann N."/>
        </authorList>
    </citation>
    <scope>PROTEIN SEQUENCE OF 23-117</scope>
</reference>
<reference key="9">
    <citation type="journal article" date="1976" name="Scand. J. Immunol.">
        <title>Complete amino acid sequence of the variable domains of two human IgM anti-gamma globulins (Lay/Pom) with shared idiotypic specificities.</title>
        <authorList>
            <person name="Capra J.D."/>
            <person name="Klapper D.G."/>
        </authorList>
    </citation>
    <scope>PROTEIN SEQUENCE OF 23-117</scope>
</reference>
<reference key="10">
    <citation type="journal article" date="1989" name="J. Immunol.">
        <title>Structural and idiotypic characterization of the L chains of human IgM autoantibodies with different specificities.</title>
        <authorList>
            <person name="Goni F.R."/>
            <person name="Chen P.P."/>
            <person name="McGinnis D."/>
            <person name="Arjonilla M.L."/>
            <person name="Fernandez J."/>
            <person name="Carson D."/>
            <person name="Solomon A."/>
            <person name="Mendez E."/>
            <person name="Frangione B."/>
        </authorList>
    </citation>
    <scope>PROTEIN SEQUENCE OF 23-117</scope>
</reference>
<reference key="11">
    <citation type="journal article" date="1989" name="J. Immunol.">
        <authorList>
            <person name="Goni F.R."/>
            <person name="Chen P.P."/>
            <person name="McGinnis D."/>
            <person name="Arjonilla M.L."/>
            <person name="Fernandez J."/>
            <person name="Carson D."/>
            <person name="Solomon A."/>
            <person name="Mendez E."/>
            <person name="Frangione B."/>
        </authorList>
    </citation>
    <scope>ERRATUM OF PUBMED:2496160</scope>
</reference>
<reference key="12">
    <citation type="journal article" date="1994" name="Biochemistry">
        <title>Comparison of crystal structures of two homologous proteins: structural origin of altered domain interactions in immunoglobulin light-chain dimers.</title>
        <authorList>
            <person name="Huang D.-B."/>
            <person name="Chang C.-H."/>
            <person name="Ainsworth C."/>
            <person name="Bruenger A.T."/>
            <person name="Eulitz M."/>
            <person name="Solomon A."/>
            <person name="Stevens F.J."/>
            <person name="Schiffer M."/>
        </authorList>
    </citation>
    <scope>PROTEIN SEQUENCE OF 23-117</scope>
    <scope>X-RAY CRYSTALLOGRAPHY (1.9 ANGSTROMS) OF 23-117</scope>
</reference>
<reference key="13">
    <citation type="journal article" date="1981" name="J. Mol. Biol.">
        <title>Characterization and preliminary crystallographic data on the VL-related fragment of the human kI Bence Jones protein Wat.</title>
        <authorList>
            <person name="Stevens F.J."/>
            <person name="Westholm F.A."/>
            <person name="Panagiotopoulos N."/>
            <person name="Schiffer M."/>
            <person name="Popp R.A."/>
            <person name="Solomon A."/>
        </authorList>
    </citation>
    <scope>PROTEIN SEQUENCE OF 23-57</scope>
</reference>
<reference key="14">
    <citation type="journal article" date="2001" name="Exp. Clin. Immunogenet.">
        <title>Nomenclature of the human immunoglobulin kappa (IGK) genes.</title>
        <authorList>
            <person name="Lefranc M.P."/>
        </authorList>
    </citation>
    <scope>NOMEMCLATURE</scope>
</reference>
<reference key="15">
    <citation type="book" date="2001" name="The Immunoglobulin FactsBook.">
        <title>The Immunoglobulin FactsBook.</title>
        <editorList>
            <person name="Lefranc M.P."/>
            <person name="Lefranc G."/>
        </editorList>
        <authorList>
            <person name="Lefranc M.P."/>
            <person name="Lefranc G."/>
        </authorList>
    </citation>
    <scope>NOMENCLATURE</scope>
</reference>
<reference key="16">
    <citation type="journal article" date="2007" name="Annu. Rev. Genet.">
        <title>Immunoglobulin somatic hypermutation.</title>
        <authorList>
            <person name="Teng G."/>
            <person name="Papavasiliou F.N."/>
        </authorList>
    </citation>
    <scope>REVIEW ON SOMATIC HYPERMUTATION</scope>
</reference>
<reference key="17">
    <citation type="journal article" date="2010" name="J. Allergy Clin. Immunol.">
        <title>Structure and function of immunoglobulins.</title>
        <authorList>
            <person name="Schroeder H.W. Jr."/>
            <person name="Cavacini L."/>
        </authorList>
    </citation>
    <scope>REVIEW ON IMMUNOGLOBULINS</scope>
</reference>
<reference key="18">
    <citation type="journal article" date="2012" name="Nat. Rev. Immunol.">
        <title>Molecular programming of B cell memory.</title>
        <authorList>
            <person name="McHeyzer-Williams M."/>
            <person name="Okitsu S."/>
            <person name="Wang N."/>
            <person name="McHeyzer-Williams L."/>
        </authorList>
    </citation>
    <scope>REVIEW ON FUNCTION</scope>
</reference>
<reference key="19">
    <citation type="journal article" date="2014" name="Front. Immunol.">
        <title>Immunoglobulin and T Cell Receptor Genes: IMGT((R)) and the Birth and Rise of Immunoinformatics.</title>
        <authorList>
            <person name="Lefranc M.P."/>
        </authorList>
    </citation>
    <scope>NOMENCLATURE</scope>
</reference>
<reference key="20">
    <citation type="journal article" date="1975" name="Biochemistry">
        <title>The molecular structure of a dimer composed of the variable portions of the Bence-Jones protein REI refined at 2.0-A resolution.</title>
        <authorList>
            <person name="Epp O."/>
            <person name="Lattman E.E."/>
            <person name="Schiffer M."/>
            <person name="Huber R."/>
            <person name="Palm W."/>
        </authorList>
    </citation>
    <scope>X-RAY CRYSTALLOGRAPHY (2.0 ANGSTROMS) OF 23-117</scope>
    <scope>DISULFIDE BOND</scope>
</reference>
<dbReference type="EMBL" id="AC233264">
    <property type="status" value="NOT_ANNOTATED_CDS"/>
    <property type="molecule type" value="Genomic_DNA"/>
</dbReference>
<dbReference type="PIR" id="A01861">
    <property type="entry name" value="K1HUAG"/>
</dbReference>
<dbReference type="PIR" id="A01863">
    <property type="entry name" value="K1HUBI"/>
</dbReference>
<dbReference type="PIR" id="A01871">
    <property type="entry name" value="K1HULY"/>
</dbReference>
<dbReference type="PIR" id="A01875">
    <property type="entry name" value="K1HUSW"/>
</dbReference>
<dbReference type="PIR" id="A01880">
    <property type="entry name" value="K1HUNY"/>
</dbReference>
<dbReference type="PIR" id="A91638">
    <property type="entry name" value="K1HURY"/>
</dbReference>
<dbReference type="PIR" id="A91663">
    <property type="entry name" value="K1HURE"/>
</dbReference>
<dbReference type="PDB" id="1AR2">
    <property type="method" value="X-ray"/>
    <property type="resolution" value="2.80 A"/>
    <property type="chains" value="A=23-117"/>
</dbReference>
<dbReference type="PDB" id="1BWW">
    <property type="method" value="X-ray"/>
    <property type="resolution" value="1.70 A"/>
    <property type="chains" value="A/B=23-117"/>
</dbReference>
<dbReference type="PDB" id="1REI">
    <property type="method" value="X-ray"/>
    <property type="resolution" value="2.00 A"/>
    <property type="chains" value="A/B=23-117"/>
</dbReference>
<dbReference type="PDB" id="1WTL">
    <property type="method" value="X-ray"/>
    <property type="resolution" value="1.90 A"/>
    <property type="chains" value="A/B=23-117"/>
</dbReference>
<dbReference type="PDB" id="4L1H">
    <property type="method" value="X-ray"/>
    <property type="resolution" value="1.68 A"/>
    <property type="chains" value="A=23-117"/>
</dbReference>
<dbReference type="PDB" id="5XP1">
    <property type="method" value="X-ray"/>
    <property type="resolution" value="2.88 A"/>
    <property type="chains" value="A/B/C/D/E/F/G/H=23-117"/>
</dbReference>
<dbReference type="PDBsum" id="1AR2"/>
<dbReference type="PDBsum" id="1BWW"/>
<dbReference type="PDBsum" id="1REI"/>
<dbReference type="PDBsum" id="1WTL"/>
<dbReference type="PDBsum" id="4L1H"/>
<dbReference type="PDBsum" id="5XP1"/>
<dbReference type="EMDB" id="EMD-13742"/>
<dbReference type="EMDB" id="EMD-15971"/>
<dbReference type="EMDB" id="EMD-17819"/>
<dbReference type="EMDB" id="EMD-23792"/>
<dbReference type="EMDB" id="EMD-24236"/>
<dbReference type="EMDB" id="EMD-24237"/>
<dbReference type="EMDB" id="EMD-25263"/>
<dbReference type="EMDB" id="EMD-25264"/>
<dbReference type="EMDB" id="EMD-25265"/>
<dbReference type="EMDB" id="EMD-25267"/>
<dbReference type="EMDB" id="EMD-25655"/>
<dbReference type="EMDB" id="EMD-25991"/>
<dbReference type="EMDB" id="EMD-25992"/>
<dbReference type="EMDB" id="EMD-28757"/>
<dbReference type="EMDB" id="EMD-30192"/>
<dbReference type="EMDB" id="EMD-30193"/>
<dbReference type="EMDB" id="EMD-30194"/>
<dbReference type="EMDB" id="EMD-30195"/>
<dbReference type="EMDB" id="EMD-30196"/>
<dbReference type="EMDB" id="EMD-30197"/>
<dbReference type="EMDB" id="EMD-32770"/>
<dbReference type="EMDB" id="EMD-32771"/>
<dbReference type="EMDB" id="EMD-32772"/>
<dbReference type="EMDB" id="EMD-33552"/>
<dbReference type="EMDB" id="EMD-34263"/>
<dbReference type="EMDB" id="EMD-36788"/>
<dbReference type="EMDB" id="EMD-36789"/>
<dbReference type="EMDB" id="EMD-37930"/>
<dbReference type="EMDB" id="EMD-38288"/>
<dbReference type="EMDB" id="EMD-39685"/>
<dbReference type="EMDB" id="EMD-43658"/>
<dbReference type="EMDB" id="EMD-43659"/>
<dbReference type="EMDB" id="EMD-45174"/>
<dbReference type="EMDB" id="EMD-45175"/>
<dbReference type="EMDB" id="EMD-45615"/>
<dbReference type="SMR" id="P01593"/>
<dbReference type="FunCoup" id="P01593">
    <property type="interactions" value="379"/>
</dbReference>
<dbReference type="IntAct" id="P01593">
    <property type="interactions" value="5"/>
</dbReference>
<dbReference type="MINT" id="P01593"/>
<dbReference type="DrugBank" id="DB04147">
    <property type="generic name" value="Dodecyldimethylamine N-oxide"/>
</dbReference>
<dbReference type="IMGT_GENE-DB" id="IGKV1D-33"/>
<dbReference type="GlyCosmos" id="P01593">
    <property type="glycosylation" value="2 sites, 1 glycan"/>
</dbReference>
<dbReference type="GlyGen" id="P01593">
    <property type="glycosylation" value="2 sites, 1 O-linked glycan (2 sites)"/>
</dbReference>
<dbReference type="iPTMnet" id="P01593"/>
<dbReference type="BioMuta" id="IGKV1D-33"/>
<dbReference type="DMDM" id="125759"/>
<dbReference type="jPOST" id="P01593"/>
<dbReference type="MassIVE" id="P01593"/>
<dbReference type="Ensembl" id="ENST00000390265.2">
    <property type="protein sequence ID" value="ENSP00000374800.2"/>
    <property type="gene ID" value="ENSG00000239975.3"/>
</dbReference>
<dbReference type="AGR" id="HGNC:5753"/>
<dbReference type="GeneCards" id="IGKV1D-33"/>
<dbReference type="HGNC" id="HGNC:5753">
    <property type="gene designation" value="IGKV1D-33"/>
</dbReference>
<dbReference type="HPA" id="ENSG00000239975">
    <property type="expression patterns" value="Tissue enhanced (gallbladder, lymphoid tissue, stomach, urinary bladder)"/>
</dbReference>
<dbReference type="neXtProt" id="NX_P01593"/>
<dbReference type="VEuPathDB" id="HostDB:ENSG00000239975"/>
<dbReference type="InParanoid" id="P01593"/>
<dbReference type="OrthoDB" id="9629570at2759"/>
<dbReference type="PAN-GO" id="P01593">
    <property type="GO annotations" value="3 GO annotations based on evolutionary models"/>
</dbReference>
<dbReference type="PhylomeDB" id="P01593"/>
<dbReference type="PathwayCommons" id="P01593"/>
<dbReference type="Reactome" id="R-HSA-166663">
    <property type="pathway name" value="Initial triggering of complement"/>
</dbReference>
<dbReference type="Reactome" id="R-HSA-173623">
    <property type="pathway name" value="Classical antibody-mediated complement activation"/>
</dbReference>
<dbReference type="Reactome" id="R-HSA-198933">
    <property type="pathway name" value="Immunoregulatory interactions between a Lymphoid and a non-Lymphoid cell"/>
</dbReference>
<dbReference type="Reactome" id="R-HSA-202733">
    <property type="pathway name" value="Cell surface interactions at the vascular wall"/>
</dbReference>
<dbReference type="Reactome" id="R-HSA-2029481">
    <property type="pathway name" value="FCGR activation"/>
</dbReference>
<dbReference type="Reactome" id="R-HSA-2029482">
    <property type="pathway name" value="Regulation of actin dynamics for phagocytic cup formation"/>
</dbReference>
<dbReference type="Reactome" id="R-HSA-2029485">
    <property type="pathway name" value="Role of phospholipids in phagocytosis"/>
</dbReference>
<dbReference type="Reactome" id="R-HSA-2168880">
    <property type="pathway name" value="Scavenging of heme from plasma"/>
</dbReference>
<dbReference type="Reactome" id="R-HSA-2454202">
    <property type="pathway name" value="Fc epsilon receptor (FCERI) signaling"/>
</dbReference>
<dbReference type="Reactome" id="R-HSA-2730905">
    <property type="pathway name" value="Role of LAT2/NTAL/LAB on calcium mobilization"/>
</dbReference>
<dbReference type="Reactome" id="R-HSA-2871796">
    <property type="pathway name" value="FCERI mediated MAPK activation"/>
</dbReference>
<dbReference type="Reactome" id="R-HSA-2871809">
    <property type="pathway name" value="FCERI mediated Ca+2 mobilization"/>
</dbReference>
<dbReference type="Reactome" id="R-HSA-2871837">
    <property type="pathway name" value="FCERI mediated NF-kB activation"/>
</dbReference>
<dbReference type="Reactome" id="R-HSA-5690714">
    <property type="pathway name" value="CD22 mediated BCR regulation"/>
</dbReference>
<dbReference type="Reactome" id="R-HSA-9664323">
    <property type="pathway name" value="FCGR3A-mediated IL10 synthesis"/>
</dbReference>
<dbReference type="Reactome" id="R-HSA-9664422">
    <property type="pathway name" value="FCGR3A-mediated phagocytosis"/>
</dbReference>
<dbReference type="Reactome" id="R-HSA-9679191">
    <property type="pathway name" value="Potential therapeutics for SARS"/>
</dbReference>
<dbReference type="Reactome" id="R-HSA-977606">
    <property type="pathway name" value="Regulation of Complement cascade"/>
</dbReference>
<dbReference type="Reactome" id="R-HSA-983695">
    <property type="pathway name" value="Antigen activates B Cell Receptor (BCR) leading to generation of second messengers"/>
</dbReference>
<dbReference type="SignaLink" id="P01593"/>
<dbReference type="ChiTaRS" id="IGKV1D-33">
    <property type="organism name" value="human"/>
</dbReference>
<dbReference type="EvolutionaryTrace" id="P01593"/>
<dbReference type="Pharos" id="P01593">
    <property type="development level" value="Tdark"/>
</dbReference>
<dbReference type="PRO" id="PR:P01593"/>
<dbReference type="Proteomes" id="UP000005640">
    <property type="component" value="Chromosome 2"/>
</dbReference>
<dbReference type="RNAct" id="P01593">
    <property type="molecule type" value="protein"/>
</dbReference>
<dbReference type="Bgee" id="ENSG00000239975">
    <property type="expression patterns" value="Expressed in bone marrow cell and 87 other cell types or tissues"/>
</dbReference>
<dbReference type="GO" id="GO:0072562">
    <property type="term" value="C:blood microparticle"/>
    <property type="evidence" value="ECO:0007005"/>
    <property type="project" value="UniProtKB"/>
</dbReference>
<dbReference type="GO" id="GO:0070062">
    <property type="term" value="C:extracellular exosome"/>
    <property type="evidence" value="ECO:0007005"/>
    <property type="project" value="UniProtKB"/>
</dbReference>
<dbReference type="GO" id="GO:0005576">
    <property type="term" value="C:extracellular region"/>
    <property type="evidence" value="ECO:0000304"/>
    <property type="project" value="Reactome"/>
</dbReference>
<dbReference type="GO" id="GO:0019814">
    <property type="term" value="C:immunoglobulin complex"/>
    <property type="evidence" value="ECO:0000318"/>
    <property type="project" value="GO_Central"/>
</dbReference>
<dbReference type="GO" id="GO:0005886">
    <property type="term" value="C:plasma membrane"/>
    <property type="evidence" value="ECO:0000304"/>
    <property type="project" value="Reactome"/>
</dbReference>
<dbReference type="GO" id="GO:0003823">
    <property type="term" value="F:antigen binding"/>
    <property type="evidence" value="ECO:0000303"/>
    <property type="project" value="UniProtKB"/>
</dbReference>
<dbReference type="GO" id="GO:0002250">
    <property type="term" value="P:adaptive immune response"/>
    <property type="evidence" value="ECO:0007669"/>
    <property type="project" value="UniProtKB-KW"/>
</dbReference>
<dbReference type="GO" id="GO:0006955">
    <property type="term" value="P:immune response"/>
    <property type="evidence" value="ECO:0000318"/>
    <property type="project" value="GO_Central"/>
</dbReference>
<dbReference type="CDD" id="cd04980">
    <property type="entry name" value="IgV_L_kappa"/>
    <property type="match status" value="1"/>
</dbReference>
<dbReference type="FunFam" id="2.60.40.10:FF:000212">
    <property type="entry name" value="Immunoglobulin kappa chain variable 12-38"/>
    <property type="match status" value="1"/>
</dbReference>
<dbReference type="Gene3D" id="2.60.40.10">
    <property type="entry name" value="Immunoglobulins"/>
    <property type="match status" value="1"/>
</dbReference>
<dbReference type="InterPro" id="IPR007110">
    <property type="entry name" value="Ig-like_dom"/>
</dbReference>
<dbReference type="InterPro" id="IPR036179">
    <property type="entry name" value="Ig-like_dom_sf"/>
</dbReference>
<dbReference type="InterPro" id="IPR013783">
    <property type="entry name" value="Ig-like_fold"/>
</dbReference>
<dbReference type="InterPro" id="IPR003599">
    <property type="entry name" value="Ig_sub"/>
</dbReference>
<dbReference type="InterPro" id="IPR013106">
    <property type="entry name" value="Ig_V-set"/>
</dbReference>
<dbReference type="InterPro" id="IPR050150">
    <property type="entry name" value="IgV_Light_Chain"/>
</dbReference>
<dbReference type="PANTHER" id="PTHR23267">
    <property type="entry name" value="IMMUNOGLOBULIN LIGHT CHAIN"/>
    <property type="match status" value="1"/>
</dbReference>
<dbReference type="Pfam" id="PF07686">
    <property type="entry name" value="V-set"/>
    <property type="match status" value="1"/>
</dbReference>
<dbReference type="SMART" id="SM00409">
    <property type="entry name" value="IG"/>
    <property type="match status" value="1"/>
</dbReference>
<dbReference type="SMART" id="SM00406">
    <property type="entry name" value="IGv"/>
    <property type="match status" value="1"/>
</dbReference>
<dbReference type="SUPFAM" id="SSF48726">
    <property type="entry name" value="Immunoglobulin"/>
    <property type="match status" value="1"/>
</dbReference>
<dbReference type="PROSITE" id="PS50835">
    <property type="entry name" value="IG_LIKE"/>
    <property type="match status" value="1"/>
</dbReference>
<name>KVD33_HUMAN</name>
<keyword id="KW-0002">3D-structure</keyword>
<keyword id="KW-1064">Adaptive immunity</keyword>
<keyword id="KW-1003">Cell membrane</keyword>
<keyword id="KW-0903">Direct protein sequencing</keyword>
<keyword id="KW-1015">Disulfide bond</keyword>
<keyword id="KW-0391">Immunity</keyword>
<keyword id="KW-1280">Immunoglobulin</keyword>
<keyword id="KW-0393">Immunoglobulin domain</keyword>
<keyword id="KW-0472">Membrane</keyword>
<keyword id="KW-1185">Reference proteome</keyword>
<keyword id="KW-0964">Secreted</keyword>
<keyword id="KW-0732">Signal</keyword>